<comment type="function">
    <text evidence="4">Plays an important role in mycobacterial pathogenesis in the context of innate immunity. Aids host cell invasion and intracellular bacillary persistence. Increases host oxidative stress response, leading to genomic instability and decrease in macrophage viability. Also induces autophagy and modulates the immune function of macrophages.</text>
</comment>
<comment type="subunit">
    <text evidence="3">Forms a complex with EsxP.</text>
</comment>
<comment type="subcellular location">
    <subcellularLocation>
        <location evidence="1 2">Secreted</location>
    </subcellularLocation>
    <text evidence="8">Probably secreted via the ESX-5 / type VII secretion system (T7SS).</text>
</comment>
<comment type="disruption phenotype">
    <text evidence="4">Deletion mutant does not show any difference in intracellular survival and oxidative stress responses.</text>
</comment>
<comment type="similarity">
    <text evidence="8">Belongs to the WXG100 family. ESAT-6 subfamily.</text>
</comment>
<proteinExistence type="evidence at protein level"/>
<reference key="1">
    <citation type="journal article" date="1998" name="Nature">
        <title>Deciphering the biology of Mycobacterium tuberculosis from the complete genome sequence.</title>
        <authorList>
            <person name="Cole S.T."/>
            <person name="Brosch R."/>
            <person name="Parkhill J."/>
            <person name="Garnier T."/>
            <person name="Churcher C.M."/>
            <person name="Harris D.E."/>
            <person name="Gordon S.V."/>
            <person name="Eiglmeier K."/>
            <person name="Gas S."/>
            <person name="Barry C.E. III"/>
            <person name="Tekaia F."/>
            <person name="Badcock K."/>
            <person name="Basham D."/>
            <person name="Brown D."/>
            <person name="Chillingworth T."/>
            <person name="Connor R."/>
            <person name="Davies R.M."/>
            <person name="Devlin K."/>
            <person name="Feltwell T."/>
            <person name="Gentles S."/>
            <person name="Hamlin N."/>
            <person name="Holroyd S."/>
            <person name="Hornsby T."/>
            <person name="Jagels K."/>
            <person name="Krogh A."/>
            <person name="McLean J."/>
            <person name="Moule S."/>
            <person name="Murphy L.D."/>
            <person name="Oliver S."/>
            <person name="Osborne J."/>
            <person name="Quail M.A."/>
            <person name="Rajandream M.A."/>
            <person name="Rogers J."/>
            <person name="Rutter S."/>
            <person name="Seeger K."/>
            <person name="Skelton S."/>
            <person name="Squares S."/>
            <person name="Squares R."/>
            <person name="Sulston J.E."/>
            <person name="Taylor K."/>
            <person name="Whitehead S."/>
            <person name="Barrell B.G."/>
        </authorList>
    </citation>
    <scope>NUCLEOTIDE SEQUENCE [LARGE SCALE GENOMIC DNA]</scope>
    <source>
        <strain>ATCC 25618 / H37Rv</strain>
    </source>
</reference>
<reference key="2">
    <citation type="journal article" date="2003" name="Microbes Infect.">
        <title>Comparative proteome analysis of culture supernatant proteins of Mycobacterium tuberculosis H37Rv and H37Ra.</title>
        <authorList>
            <person name="He X.Y."/>
            <person name="Zhuang Y.H."/>
            <person name="Zhang X.G."/>
            <person name="Li G.L."/>
        </authorList>
    </citation>
    <scope>IDENTIFICATION BY MASS SPECTROMETRY</scope>
    <scope>SUBCELLULAR LOCATION</scope>
    <source>
        <strain>ATCC 27294 / TMC 102 / H37Rv</strain>
    </source>
</reference>
<reference key="3">
    <citation type="journal article" date="2007" name="Proteomics">
        <title>Comprehensive analysis of exported proteins from Mycobacterium tuberculosis H37Rv.</title>
        <authorList>
            <person name="Malen H."/>
            <person name="Berven F.S."/>
            <person name="Fladmark K.E."/>
            <person name="Wiker H.G."/>
        </authorList>
    </citation>
    <scope>IDENTIFICATION BY MASS SPECTROMETRY</scope>
    <scope>SUBCELLULAR LOCATION</scope>
    <source>
        <strain>ATCC 27294 / TMC 102 / H37Rv</strain>
    </source>
</reference>
<reference key="4">
    <citation type="journal article" date="2009" name="PLoS Pathog.">
        <title>Systematic genetic nomenclature for type VII secretion systems.</title>
        <authorList>
            <person name="Bitter W."/>
            <person name="Houben E.N."/>
            <person name="Bottai D."/>
            <person name="Brodin P."/>
            <person name="Brown E.J."/>
            <person name="Cox J.S."/>
            <person name="Derbyshire K."/>
            <person name="Fortune S.M."/>
            <person name="Gao L.Y."/>
            <person name="Liu J."/>
            <person name="Gey van Pittius N.C."/>
            <person name="Pym A.S."/>
            <person name="Rubin E.J."/>
            <person name="Sherman D.R."/>
            <person name="Cole S.T."/>
            <person name="Brosch R."/>
        </authorList>
    </citation>
    <scope>NOMENCLATURE</scope>
</reference>
<reference key="5">
    <citation type="journal article" date="2011" name="Mol. Cell. Proteomics">
        <title>Proteogenomic analysis of Mycobacterium tuberculosis by high resolution mass spectrometry.</title>
        <authorList>
            <person name="Kelkar D.S."/>
            <person name="Kumar D."/>
            <person name="Kumar P."/>
            <person name="Balakrishnan L."/>
            <person name="Muthusamy B."/>
            <person name="Yadav A.K."/>
            <person name="Shrivastava P."/>
            <person name="Marimuthu A."/>
            <person name="Anand S."/>
            <person name="Sundaram H."/>
            <person name="Kingsbury R."/>
            <person name="Harsha H.C."/>
            <person name="Nair B."/>
            <person name="Prasad T.S."/>
            <person name="Chauhan D.S."/>
            <person name="Katoch K."/>
            <person name="Katoch V.M."/>
            <person name="Kumar P."/>
            <person name="Chaerkady R."/>
            <person name="Ramachandran S."/>
            <person name="Dash D."/>
            <person name="Pandey A."/>
        </authorList>
    </citation>
    <scope>IDENTIFICATION BY MASS SPECTROMETRY [LARGE SCALE ANALYSIS]</scope>
    <source>
        <strain>ATCC 25618 / H37Rv</strain>
    </source>
</reference>
<reference key="6">
    <citation type="journal article" date="2016" name="Tuberculosis">
        <title>Mycobacterium tuberculosis EsxO (Rv2346c) promotes bacillary survival by inducing oxidative stress mediated genomic instability in macrophages.</title>
        <authorList>
            <person name="Mohanty S."/>
            <person name="Dal Molin M."/>
            <person name="Ganguli G."/>
            <person name="Padhi A."/>
            <person name="Jena P."/>
            <person name="Selchow P."/>
            <person name="Sengupta S."/>
            <person name="Meuli M."/>
            <person name="Sander P."/>
            <person name="Sonawane A."/>
        </authorList>
    </citation>
    <scope>FUNCTION</scope>
    <scope>DISRUPTION PHENOTYPE</scope>
</reference>
<reference evidence="9 10" key="7">
    <citation type="journal article" date="2013" name="PLoS ONE">
        <title>Heterologous expression of mycobacterial Esx complexes in Escherichia coli for structural studies is facilitated by the use of maltose binding protein fusions.</title>
        <authorList>
            <person name="Arbing M.A."/>
            <person name="Chan S."/>
            <person name="Harris L."/>
            <person name="Kuo E."/>
            <person name="Zhou T.T."/>
            <person name="Ahn C.J."/>
            <person name="Nguyen L."/>
            <person name="He Q."/>
            <person name="Lu J."/>
            <person name="Menchavez P.T."/>
            <person name="Shin A."/>
            <person name="Holton T."/>
            <person name="Sawaya M.R."/>
            <person name="Cascio D."/>
            <person name="Eisenberg D."/>
        </authorList>
    </citation>
    <scope>X-RAY CRYSTALLOGRAPHY (2.55 ANGSTROMS)</scope>
    <scope>INTERACTION WITH ESXP</scope>
</reference>
<keyword id="KW-0002">3D-structure</keyword>
<keyword id="KW-1185">Reference proteome</keyword>
<keyword id="KW-0964">Secreted</keyword>
<keyword id="KW-0843">Virulence</keyword>
<evidence type="ECO:0000269" key="1">
    <source>
    </source>
</evidence>
<evidence type="ECO:0000269" key="2">
    <source>
    </source>
</evidence>
<evidence type="ECO:0000269" key="3">
    <source>
    </source>
</evidence>
<evidence type="ECO:0000269" key="4">
    <source>
    </source>
</evidence>
<evidence type="ECO:0000303" key="5">
    <source>
    </source>
</evidence>
<evidence type="ECO:0000303" key="6">
    <source>
    </source>
</evidence>
<evidence type="ECO:0000305" key="7"/>
<evidence type="ECO:0000305" key="8">
    <source>
    </source>
</evidence>
<evidence type="ECO:0007744" key="9">
    <source>
        <dbReference type="PDB" id="3OGI"/>
    </source>
</evidence>
<evidence type="ECO:0007744" key="10">
    <source>
        <dbReference type="PDB" id="4GZR"/>
    </source>
</evidence>
<evidence type="ECO:0007829" key="11">
    <source>
        <dbReference type="PDB" id="3OGI"/>
    </source>
</evidence>
<evidence type="ECO:0007829" key="12">
    <source>
        <dbReference type="PDB" id="4GZR"/>
    </source>
</evidence>
<accession>P9WNI7</accession>
<accession>L0T9C9</accession>
<accession>P95242</accession>
<gene>
    <name evidence="5 6" type="primary">esxO</name>
    <name type="ordered locus">Rv2346c</name>
    <name type="ORF">MTCY98.15c</name>
</gene>
<name>ESXO_MYCTU</name>
<protein>
    <recommendedName>
        <fullName evidence="7">ESAT-6-like protein EsxO</fullName>
    </recommendedName>
</protein>
<sequence>MTINYQFGDVDAHGAMIRAQAGLLEAEHQAIVRDVLAAGDFWGGAGSVACQEFITQLGRNFQVIYEQANAHGQKVQAAGNNMAQTDSAVGSSWA</sequence>
<organism>
    <name type="scientific">Mycobacterium tuberculosis (strain ATCC 25618 / H37Rv)</name>
    <dbReference type="NCBI Taxonomy" id="83332"/>
    <lineage>
        <taxon>Bacteria</taxon>
        <taxon>Bacillati</taxon>
        <taxon>Actinomycetota</taxon>
        <taxon>Actinomycetes</taxon>
        <taxon>Mycobacteriales</taxon>
        <taxon>Mycobacteriaceae</taxon>
        <taxon>Mycobacterium</taxon>
        <taxon>Mycobacterium tuberculosis complex</taxon>
    </lineage>
</organism>
<feature type="chain" id="PRO_0000167814" description="ESAT-6-like protein EsxO">
    <location>
        <begin position="1"/>
        <end position="94"/>
    </location>
</feature>
<feature type="helix" evidence="11">
    <location>
        <begin position="14"/>
        <end position="37"/>
    </location>
</feature>
<feature type="helix" evidence="12">
    <location>
        <begin position="39"/>
        <end position="42"/>
    </location>
</feature>
<feature type="helix" evidence="11">
    <location>
        <begin position="51"/>
        <end position="66"/>
    </location>
</feature>
<dbReference type="EMBL" id="AL123456">
    <property type="protein sequence ID" value="CCP45134.1"/>
    <property type="molecule type" value="Genomic_DNA"/>
</dbReference>
<dbReference type="PIR" id="C70662">
    <property type="entry name" value="C70662"/>
</dbReference>
<dbReference type="RefSeq" id="NP_216862.1">
    <property type="nucleotide sequence ID" value="NC_000962.3"/>
</dbReference>
<dbReference type="RefSeq" id="WP_003899283.1">
    <property type="nucleotide sequence ID" value="NZ_NVQJ01000012.1"/>
</dbReference>
<dbReference type="PDB" id="3OGI">
    <property type="method" value="X-ray"/>
    <property type="resolution" value="2.55 A"/>
    <property type="chains" value="A/C=1-94"/>
</dbReference>
<dbReference type="PDB" id="4GZR">
    <property type="method" value="X-ray"/>
    <property type="resolution" value="2.55 A"/>
    <property type="chains" value="A/C=1-94"/>
</dbReference>
<dbReference type="PDBsum" id="3OGI"/>
<dbReference type="PDBsum" id="4GZR"/>
<dbReference type="SMR" id="P9WNI7"/>
<dbReference type="IntAct" id="P9WNI7">
    <property type="interactions" value="8"/>
</dbReference>
<dbReference type="MINT" id="P9WNI7"/>
<dbReference type="STRING" id="83332.Rv2346c"/>
<dbReference type="PaxDb" id="83332-Rv2346c"/>
<dbReference type="DNASU" id="888956"/>
<dbReference type="GeneID" id="888956"/>
<dbReference type="KEGG" id="mtu:Rv2346c"/>
<dbReference type="KEGG" id="mtv:RVBD_2346c"/>
<dbReference type="TubercuList" id="Rv2346c"/>
<dbReference type="eggNOG" id="ENOG5032I3T">
    <property type="taxonomic scope" value="Bacteria"/>
</dbReference>
<dbReference type="InParanoid" id="P9WNI7"/>
<dbReference type="OrthoDB" id="4625013at2"/>
<dbReference type="PhylomeDB" id="P9WNI7"/>
<dbReference type="EvolutionaryTrace" id="P9WNI7"/>
<dbReference type="PHI-base" id="PHI:5581"/>
<dbReference type="PHI-base" id="PHI:8519"/>
<dbReference type="Proteomes" id="UP000001584">
    <property type="component" value="Chromosome"/>
</dbReference>
<dbReference type="GO" id="GO:0005576">
    <property type="term" value="C:extracellular region"/>
    <property type="evidence" value="ECO:0007005"/>
    <property type="project" value="MTBBASE"/>
</dbReference>
<dbReference type="GO" id="GO:0009274">
    <property type="term" value="C:peptidoglycan-based cell wall"/>
    <property type="evidence" value="ECO:0007005"/>
    <property type="project" value="MTBBASE"/>
</dbReference>
<dbReference type="GO" id="GO:0005886">
    <property type="term" value="C:plasma membrane"/>
    <property type="evidence" value="ECO:0007005"/>
    <property type="project" value="MTBBASE"/>
</dbReference>
<dbReference type="FunFam" id="1.10.287.1060:FF:000004">
    <property type="entry name" value="ESAT-6-like protein EsxI"/>
    <property type="match status" value="1"/>
</dbReference>
<dbReference type="Gene3D" id="1.10.287.1060">
    <property type="entry name" value="ESAT-6-like"/>
    <property type="match status" value="1"/>
</dbReference>
<dbReference type="InterPro" id="IPR009416">
    <property type="entry name" value="ESAT-6-like_Myco"/>
</dbReference>
<dbReference type="InterPro" id="IPR036689">
    <property type="entry name" value="ESAT-6-like_sf"/>
</dbReference>
<dbReference type="InterPro" id="IPR010310">
    <property type="entry name" value="T7SS_ESAT-6-like"/>
</dbReference>
<dbReference type="Pfam" id="PF06013">
    <property type="entry name" value="WXG100"/>
    <property type="match status" value="1"/>
</dbReference>
<dbReference type="PIRSF" id="PIRSF037656">
    <property type="entry name" value="DUF1066"/>
    <property type="match status" value="1"/>
</dbReference>
<dbReference type="SUPFAM" id="SSF140453">
    <property type="entry name" value="EsxAB dimer-like"/>
    <property type="match status" value="1"/>
</dbReference>